<evidence type="ECO:0000255" key="1">
    <source>
        <dbReference type="HAMAP-Rule" id="MF_00200"/>
    </source>
</evidence>
<keyword id="KW-0067">ATP-binding</keyword>
<keyword id="KW-0963">Cytoplasm</keyword>
<keyword id="KW-0436">Ligase</keyword>
<keyword id="KW-0547">Nucleotide-binding</keyword>
<keyword id="KW-1185">Reference proteome</keyword>
<protein>
    <recommendedName>
        <fullName evidence="1">RNA 3'-terminal phosphate cyclase</fullName>
        <shortName evidence="1">RNA cyclase</shortName>
        <shortName evidence="1">RNA-3'-phosphate cyclase</shortName>
        <ecNumber evidence="1">6.5.1.4</ecNumber>
    </recommendedName>
</protein>
<proteinExistence type="inferred from homology"/>
<sequence length="338" mass="35912">MKRMIALDGAQGEGGGQILRSALSLSMITGQPFTITSIRAGRAKPGLLRQHLTAVKAAAEICRATVEGAELGSQRLVFRPGTVRGGEYRFAIGSAGSCTLVLQTVLPALWFADGPSRVEVSGGTDNPSAPPADFIRRVLEPLLAKIGIHQQTTLLRHGFYPAGGGVVATEVSPVASFNTLQLGERGNIVQMCGEVLLAGVPRHVAEREIATLAGSFSLHEQNIHNLPRDQGPGNTVSLEVESENITERFFVVGEKRVSAEVVAAQLVKEVKRYLASPAAVGEYLADQLVLPMALAGAGEFKVAHPSCHLLTNIAVVERFLPVRFGLIETDGVTRVSIE</sequence>
<name>RTCA_ECO24</name>
<comment type="function">
    <text evidence="1">Catalyzes the conversion of 3'-phosphate to a 2',3'-cyclic phosphodiester at the end of RNA. The mechanism of action of the enzyme occurs in 3 steps: (A) adenylation of the enzyme by ATP; (B) transfer of adenylate to an RNA-N3'P to produce RNA-N3'PP5'A; (C) and attack of the adjacent 2'-hydroxyl on the 3'-phosphorus in the diester linkage to produce the cyclic end product. The biological role of this enzyme is unknown but it is likely to function in some aspects of cellular RNA processing.</text>
</comment>
<comment type="catalytic activity">
    <reaction evidence="1">
        <text>a 3'-end 3'-phospho-ribonucleotide-RNA + ATP = a 3'-end 2',3'-cyclophospho-ribonucleotide-RNA + AMP + diphosphate</text>
        <dbReference type="Rhea" id="RHEA:23976"/>
        <dbReference type="Rhea" id="RHEA-COMP:10463"/>
        <dbReference type="Rhea" id="RHEA-COMP:10464"/>
        <dbReference type="ChEBI" id="CHEBI:30616"/>
        <dbReference type="ChEBI" id="CHEBI:33019"/>
        <dbReference type="ChEBI" id="CHEBI:83062"/>
        <dbReference type="ChEBI" id="CHEBI:83064"/>
        <dbReference type="ChEBI" id="CHEBI:456215"/>
        <dbReference type="EC" id="6.5.1.4"/>
    </reaction>
</comment>
<comment type="subcellular location">
    <subcellularLocation>
        <location evidence="1">Cytoplasm</location>
    </subcellularLocation>
</comment>
<comment type="similarity">
    <text evidence="1">Belongs to the RNA 3'-terminal cyclase family. Type 1 subfamily.</text>
</comment>
<reference key="1">
    <citation type="journal article" date="2008" name="J. Bacteriol.">
        <title>The pangenome structure of Escherichia coli: comparative genomic analysis of E. coli commensal and pathogenic isolates.</title>
        <authorList>
            <person name="Rasko D.A."/>
            <person name="Rosovitz M.J."/>
            <person name="Myers G.S.A."/>
            <person name="Mongodin E.F."/>
            <person name="Fricke W.F."/>
            <person name="Gajer P."/>
            <person name="Crabtree J."/>
            <person name="Sebaihia M."/>
            <person name="Thomson N.R."/>
            <person name="Chaudhuri R."/>
            <person name="Henderson I.R."/>
            <person name="Sperandio V."/>
            <person name="Ravel J."/>
        </authorList>
    </citation>
    <scope>NUCLEOTIDE SEQUENCE [LARGE SCALE GENOMIC DNA]</scope>
    <source>
        <strain>E24377A / ETEC</strain>
    </source>
</reference>
<gene>
    <name evidence="1" type="primary">rtcA</name>
    <name type="ordered locus">EcE24377A_3895</name>
</gene>
<accession>A7ZSU9</accession>
<organism>
    <name type="scientific">Escherichia coli O139:H28 (strain E24377A / ETEC)</name>
    <dbReference type="NCBI Taxonomy" id="331111"/>
    <lineage>
        <taxon>Bacteria</taxon>
        <taxon>Pseudomonadati</taxon>
        <taxon>Pseudomonadota</taxon>
        <taxon>Gammaproteobacteria</taxon>
        <taxon>Enterobacterales</taxon>
        <taxon>Enterobacteriaceae</taxon>
        <taxon>Escherichia</taxon>
    </lineage>
</organism>
<feature type="chain" id="PRO_1000058561" description="RNA 3'-terminal phosphate cyclase">
    <location>
        <begin position="1"/>
        <end position="338"/>
    </location>
</feature>
<feature type="active site" description="Tele-AMP-histidine intermediate" evidence="1">
    <location>
        <position position="308"/>
    </location>
</feature>
<feature type="binding site" evidence="1">
    <location>
        <position position="103"/>
    </location>
    <ligand>
        <name>ATP</name>
        <dbReference type="ChEBI" id="CHEBI:30616"/>
    </ligand>
</feature>
<feature type="binding site" evidence="1">
    <location>
        <begin position="283"/>
        <end position="287"/>
    </location>
    <ligand>
        <name>ATP</name>
        <dbReference type="ChEBI" id="CHEBI:30616"/>
    </ligand>
</feature>
<dbReference type="EC" id="6.5.1.4" evidence="1"/>
<dbReference type="EMBL" id="CP000800">
    <property type="protein sequence ID" value="ABV16896.1"/>
    <property type="molecule type" value="Genomic_DNA"/>
</dbReference>
<dbReference type="RefSeq" id="WP_001351532.1">
    <property type="nucleotide sequence ID" value="NC_009801.1"/>
</dbReference>
<dbReference type="SMR" id="A7ZSU9"/>
<dbReference type="GeneID" id="75202262"/>
<dbReference type="KEGG" id="ecw:EcE24377A_3895"/>
<dbReference type="HOGENOM" id="CLU_027882_0_0_6"/>
<dbReference type="Proteomes" id="UP000001122">
    <property type="component" value="Chromosome"/>
</dbReference>
<dbReference type="GO" id="GO:0005737">
    <property type="term" value="C:cytoplasm"/>
    <property type="evidence" value="ECO:0007669"/>
    <property type="project" value="UniProtKB-SubCell"/>
</dbReference>
<dbReference type="GO" id="GO:0005524">
    <property type="term" value="F:ATP binding"/>
    <property type="evidence" value="ECO:0007669"/>
    <property type="project" value="UniProtKB-KW"/>
</dbReference>
<dbReference type="GO" id="GO:0003963">
    <property type="term" value="F:RNA-3'-phosphate cyclase activity"/>
    <property type="evidence" value="ECO:0007669"/>
    <property type="project" value="UniProtKB-UniRule"/>
</dbReference>
<dbReference type="GO" id="GO:0006396">
    <property type="term" value="P:RNA processing"/>
    <property type="evidence" value="ECO:0007669"/>
    <property type="project" value="InterPro"/>
</dbReference>
<dbReference type="FunFam" id="3.65.10.20:FF:000002">
    <property type="entry name" value="GM19193"/>
    <property type="match status" value="1"/>
</dbReference>
<dbReference type="FunFam" id="3.30.360.20:FF:000003">
    <property type="entry name" value="RNA 3'-terminal phosphate cyclase"/>
    <property type="match status" value="1"/>
</dbReference>
<dbReference type="Gene3D" id="3.65.10.20">
    <property type="entry name" value="RNA 3'-terminal phosphate cyclase domain"/>
    <property type="match status" value="1"/>
</dbReference>
<dbReference type="Gene3D" id="3.30.360.20">
    <property type="entry name" value="RNA 3'-terminal phosphate cyclase, insert domain"/>
    <property type="match status" value="1"/>
</dbReference>
<dbReference type="HAMAP" id="MF_00200">
    <property type="entry name" value="RTC"/>
    <property type="match status" value="1"/>
</dbReference>
<dbReference type="InterPro" id="IPR013791">
    <property type="entry name" value="RNA3'-term_phos_cycl_insert"/>
</dbReference>
<dbReference type="InterPro" id="IPR023797">
    <property type="entry name" value="RNA3'_phos_cyclase_dom"/>
</dbReference>
<dbReference type="InterPro" id="IPR037136">
    <property type="entry name" value="RNA3'_phos_cyclase_dom_sf"/>
</dbReference>
<dbReference type="InterPro" id="IPR000228">
    <property type="entry name" value="RNA3'_term_phos_cyc"/>
</dbReference>
<dbReference type="InterPro" id="IPR017770">
    <property type="entry name" value="RNA3'_term_phos_cyc_type_1"/>
</dbReference>
<dbReference type="InterPro" id="IPR020719">
    <property type="entry name" value="RNA3'_term_phos_cycl-like_CS"/>
</dbReference>
<dbReference type="InterPro" id="IPR013792">
    <property type="entry name" value="RNA3'P_cycl/enolpyr_Trfase_a/b"/>
</dbReference>
<dbReference type="InterPro" id="IPR036553">
    <property type="entry name" value="RPTC_insert"/>
</dbReference>
<dbReference type="NCBIfam" id="NF003246">
    <property type="entry name" value="PRK04204.1-2"/>
    <property type="match status" value="1"/>
</dbReference>
<dbReference type="NCBIfam" id="NF003247">
    <property type="entry name" value="PRK04204.1-3"/>
    <property type="match status" value="1"/>
</dbReference>
<dbReference type="NCBIfam" id="TIGR03399">
    <property type="entry name" value="RNA_3prim_cycl"/>
    <property type="match status" value="1"/>
</dbReference>
<dbReference type="PANTHER" id="PTHR11096">
    <property type="entry name" value="RNA 3' TERMINAL PHOSPHATE CYCLASE"/>
    <property type="match status" value="1"/>
</dbReference>
<dbReference type="PANTHER" id="PTHR11096:SF0">
    <property type="entry name" value="RNA 3'-TERMINAL PHOSPHATE CYCLASE"/>
    <property type="match status" value="1"/>
</dbReference>
<dbReference type="Pfam" id="PF01137">
    <property type="entry name" value="RTC"/>
    <property type="match status" value="1"/>
</dbReference>
<dbReference type="Pfam" id="PF05189">
    <property type="entry name" value="RTC_insert"/>
    <property type="match status" value="1"/>
</dbReference>
<dbReference type="PIRSF" id="PIRSF005378">
    <property type="entry name" value="RNA3'_term_phos_cycl_euk"/>
    <property type="match status" value="1"/>
</dbReference>
<dbReference type="SUPFAM" id="SSF55205">
    <property type="entry name" value="EPT/RTPC-like"/>
    <property type="match status" value="2"/>
</dbReference>
<dbReference type="SUPFAM" id="SSF52913">
    <property type="entry name" value="RNA 3'-terminal phosphate cyclase, RPTC, insert domain"/>
    <property type="match status" value="1"/>
</dbReference>
<dbReference type="PROSITE" id="PS01287">
    <property type="entry name" value="RTC"/>
    <property type="match status" value="1"/>
</dbReference>